<accession>Q7XN54</accession>
<accession>Q0JBC3</accession>
<accession>Q6R5L8</accession>
<evidence type="ECO:0000250" key="1"/>
<evidence type="ECO:0000255" key="2"/>
<evidence type="ECO:0000256" key="3">
    <source>
        <dbReference type="SAM" id="MobiDB-lite"/>
    </source>
</evidence>
<evidence type="ECO:0000269" key="4">
    <source>
    </source>
</evidence>
<evidence type="ECO:0000305" key="5"/>
<proteinExistence type="evidence at transcript level"/>
<protein>
    <recommendedName>
        <fullName>Probable metal-nicotianamine transporter YSL16</fullName>
    </recommendedName>
    <alternativeName>
        <fullName>Protein YELLOW STRIPE LIKE 16</fullName>
        <shortName>OsYSL16</shortName>
    </alternativeName>
</protein>
<name>YSL16_ORYSJ</name>
<reference key="1">
    <citation type="journal article" date="2004" name="Plant J.">
        <title>OsYSL2 is a rice metal-nicotianamine transporter that is regulated by iron and expressed in the phloem.</title>
        <authorList>
            <person name="Koike S."/>
            <person name="Inoue H."/>
            <person name="Mizuno D."/>
            <person name="Takahashi M."/>
            <person name="Nakanishi H."/>
            <person name="Mori S."/>
            <person name="Nishizawa N.K."/>
        </authorList>
    </citation>
    <scope>NUCLEOTIDE SEQUENCE [MRNA]</scope>
    <scope>GENE FAMILY</scope>
    <scope>NOMENCLATURE</scope>
    <source>
        <strain>cv. Nipponbare</strain>
    </source>
</reference>
<reference key="2">
    <citation type="submission" date="2003-12" db="EMBL/GenBank/DDBJ databases">
        <title>Sequence of rice iron transport protein 2 gene.</title>
        <authorList>
            <person name="Zhu Z."/>
        </authorList>
    </citation>
    <scope>NUCLEOTIDE SEQUENCE [MRNA]</scope>
</reference>
<reference key="3">
    <citation type="journal article" date="2002" name="Nature">
        <title>Sequence and analysis of rice chromosome 4.</title>
        <authorList>
            <person name="Feng Q."/>
            <person name="Zhang Y."/>
            <person name="Hao P."/>
            <person name="Wang S."/>
            <person name="Fu G."/>
            <person name="Huang Y."/>
            <person name="Li Y."/>
            <person name="Zhu J."/>
            <person name="Liu Y."/>
            <person name="Hu X."/>
            <person name="Jia P."/>
            <person name="Zhang Y."/>
            <person name="Zhao Q."/>
            <person name="Ying K."/>
            <person name="Yu S."/>
            <person name="Tang Y."/>
            <person name="Weng Q."/>
            <person name="Zhang L."/>
            <person name="Lu Y."/>
            <person name="Mu J."/>
            <person name="Lu Y."/>
            <person name="Zhang L.S."/>
            <person name="Yu Z."/>
            <person name="Fan D."/>
            <person name="Liu X."/>
            <person name="Lu T."/>
            <person name="Li C."/>
            <person name="Wu Y."/>
            <person name="Sun T."/>
            <person name="Lei H."/>
            <person name="Li T."/>
            <person name="Hu H."/>
            <person name="Guan J."/>
            <person name="Wu M."/>
            <person name="Zhang R."/>
            <person name="Zhou B."/>
            <person name="Chen Z."/>
            <person name="Chen L."/>
            <person name="Jin Z."/>
            <person name="Wang R."/>
            <person name="Yin H."/>
            <person name="Cai Z."/>
            <person name="Ren S."/>
            <person name="Lv G."/>
            <person name="Gu W."/>
            <person name="Zhu G."/>
            <person name="Tu Y."/>
            <person name="Jia J."/>
            <person name="Zhang Y."/>
            <person name="Chen J."/>
            <person name="Kang H."/>
            <person name="Chen X."/>
            <person name="Shao C."/>
            <person name="Sun Y."/>
            <person name="Hu Q."/>
            <person name="Zhang X."/>
            <person name="Zhang W."/>
            <person name="Wang L."/>
            <person name="Ding C."/>
            <person name="Sheng H."/>
            <person name="Gu J."/>
            <person name="Chen S."/>
            <person name="Ni L."/>
            <person name="Zhu F."/>
            <person name="Chen W."/>
            <person name="Lan L."/>
            <person name="Lai Y."/>
            <person name="Cheng Z."/>
            <person name="Gu M."/>
            <person name="Jiang J."/>
            <person name="Li J."/>
            <person name="Hong G."/>
            <person name="Xue Y."/>
            <person name="Han B."/>
        </authorList>
    </citation>
    <scope>NUCLEOTIDE SEQUENCE [LARGE SCALE GENOMIC DNA]</scope>
    <source>
        <strain>cv. Nipponbare</strain>
    </source>
</reference>
<reference key="4">
    <citation type="journal article" date="2005" name="Nature">
        <title>The map-based sequence of the rice genome.</title>
        <authorList>
            <consortium name="International rice genome sequencing project (IRGSP)"/>
        </authorList>
    </citation>
    <scope>NUCLEOTIDE SEQUENCE [LARGE SCALE GENOMIC DNA]</scope>
    <source>
        <strain>cv. Nipponbare</strain>
    </source>
</reference>
<reference key="5">
    <citation type="journal article" date="2008" name="Nucleic Acids Res.">
        <title>The rice annotation project database (RAP-DB): 2008 update.</title>
        <authorList>
            <consortium name="The rice annotation project (RAP)"/>
        </authorList>
    </citation>
    <scope>GENOME REANNOTATION</scope>
    <source>
        <strain>cv. Nipponbare</strain>
    </source>
</reference>
<reference key="6">
    <citation type="journal article" date="2013" name="Rice">
        <title>Improvement of the Oryza sativa Nipponbare reference genome using next generation sequence and optical map data.</title>
        <authorList>
            <person name="Kawahara Y."/>
            <person name="de la Bastide M."/>
            <person name="Hamilton J.P."/>
            <person name="Kanamori H."/>
            <person name="McCombie W.R."/>
            <person name="Ouyang S."/>
            <person name="Schwartz D.C."/>
            <person name="Tanaka T."/>
            <person name="Wu J."/>
            <person name="Zhou S."/>
            <person name="Childs K.L."/>
            <person name="Davidson R.M."/>
            <person name="Lin H."/>
            <person name="Quesada-Ocampo L."/>
            <person name="Vaillancourt B."/>
            <person name="Sakai H."/>
            <person name="Lee S.S."/>
            <person name="Kim J."/>
            <person name="Numa H."/>
            <person name="Itoh T."/>
            <person name="Buell C.R."/>
            <person name="Matsumoto T."/>
        </authorList>
    </citation>
    <scope>GENOME REANNOTATION</scope>
    <source>
        <strain>cv. Nipponbare</strain>
    </source>
</reference>
<reference key="7">
    <citation type="journal article" date="2009" name="J. Biol. Chem.">
        <title>Rice OsYSL15 is an iron-regulated iron(III)-deoxymugineic acid Transporter expressed in the roots and is essential for iron uptake in early growth of the seedlings.</title>
        <authorList>
            <person name="Inoue H."/>
            <person name="Kobayashi T."/>
            <person name="Nozoye T."/>
            <person name="Takahashi M."/>
            <person name="Kakei Y."/>
            <person name="Suzuki K."/>
            <person name="Nakazono M."/>
            <person name="Nakanishi H."/>
            <person name="Mori S."/>
            <person name="Nishizawa N.K."/>
        </authorList>
    </citation>
    <scope>TISSUE SPECIFICITY</scope>
    <scope>INDUCTION</scope>
</reference>
<comment type="function">
    <text evidence="1">May be involved in the transport of nicotianamine-chelated metals.</text>
</comment>
<comment type="subcellular location">
    <subcellularLocation>
        <location evidence="5">Membrane</location>
        <topology evidence="5">Multi-pass membrane protein</topology>
    </subcellularLocation>
</comment>
<comment type="tissue specificity">
    <text evidence="4">Expressed in roots.</text>
</comment>
<comment type="induction">
    <text evidence="4">In root stele by iron deficiency.</text>
</comment>
<comment type="similarity">
    <text evidence="5">Belongs to the YSL (TC 2.A.67.2) family.</text>
</comment>
<keyword id="KW-0472">Membrane</keyword>
<keyword id="KW-1185">Reference proteome</keyword>
<keyword id="KW-0812">Transmembrane</keyword>
<keyword id="KW-1133">Transmembrane helix</keyword>
<keyword id="KW-0813">Transport</keyword>
<sequence length="675" mass="73808">MDRHALGGGGALEIEKTPEAAEDMESEPALAAAREAERVPPWREQVTARGMVAALLIGVVYTVIVMKLSLTTGLIPTLNVSAALLAFLALRGWTHALDRLGIASRPFTRQENTVIQTCAVACYTIGYGGGFGSFLLGLNKKTYELSGASTPGNVPGSYKEPGIGWMTGFLLSTSFVGLLTLLPLRKVLVIDYKLTYPSGTATAVLINGFHTPQGDKNAKKQVRGFLRYFGISFLWSFFQWFYTGGDVCGFLQFPTFGLKAWKHTFFFDFSLTYVGAGMICSHLVNLSLLFGAILSWGIMWPLIGKQKGNWYSAKASESSMSGLFGYKSFICIALLVGDGFYNFVKVIVVTLKSVRERSRRRGLNNRVADADTMAIDDMQRNEVFNRDNIPTWMAYTGYTLLSVIAVVLIPVMFRQVKWYYVIIAYLLAPALGFCNAYGTGLTDMNMGYNYGKIALFIFAAWAGKDDGVVAGLVGCGLVKQLVLISADLMHDFKTGHLTLTSPRSMLVGQVVGTLMGCVVAPLTFFLFYKAFDVGDPNGYWKAPYALIYRNMAIIGVEGFSALPRHCLQLCAGFFAFAVLANLARDFLPRRYGRYMPLPMAMAVPFLVGASFAIDMCAGSLVVFLWHRFDGKRAALLVPAVASGLICGDGIWTFPSSLLALAKVKPPICMKFIPGN</sequence>
<organism>
    <name type="scientific">Oryza sativa subsp. japonica</name>
    <name type="common">Rice</name>
    <dbReference type="NCBI Taxonomy" id="39947"/>
    <lineage>
        <taxon>Eukaryota</taxon>
        <taxon>Viridiplantae</taxon>
        <taxon>Streptophyta</taxon>
        <taxon>Embryophyta</taxon>
        <taxon>Tracheophyta</taxon>
        <taxon>Spermatophyta</taxon>
        <taxon>Magnoliopsida</taxon>
        <taxon>Liliopsida</taxon>
        <taxon>Poales</taxon>
        <taxon>Poaceae</taxon>
        <taxon>BOP clade</taxon>
        <taxon>Oryzoideae</taxon>
        <taxon>Oryzeae</taxon>
        <taxon>Oryzinae</taxon>
        <taxon>Oryza</taxon>
        <taxon>Oryza sativa</taxon>
    </lineage>
</organism>
<dbReference type="EMBL" id="AB190924">
    <property type="protein sequence ID" value="BAE91894.1"/>
    <property type="molecule type" value="mRNA"/>
</dbReference>
<dbReference type="EMBL" id="AY512582">
    <property type="protein sequence ID" value="AAS49494.1"/>
    <property type="molecule type" value="mRNA"/>
</dbReference>
<dbReference type="EMBL" id="AL606695">
    <property type="protein sequence ID" value="CAE04269.2"/>
    <property type="molecule type" value="Genomic_DNA"/>
</dbReference>
<dbReference type="EMBL" id="AP008210">
    <property type="protein sequence ID" value="BAF15364.2"/>
    <property type="molecule type" value="Genomic_DNA"/>
</dbReference>
<dbReference type="EMBL" id="AP014960">
    <property type="protein sequence ID" value="BAS90306.1"/>
    <property type="molecule type" value="Genomic_DNA"/>
</dbReference>
<dbReference type="RefSeq" id="XP_015637058.1">
    <property type="nucleotide sequence ID" value="XM_015781572.1"/>
</dbReference>
<dbReference type="SMR" id="Q7XN54"/>
<dbReference type="FunCoup" id="Q7XN54">
    <property type="interactions" value="160"/>
</dbReference>
<dbReference type="STRING" id="39947.Q7XN54"/>
<dbReference type="PaxDb" id="39947-Q7XN54"/>
<dbReference type="EnsemblPlants" id="Os04t0542800-01">
    <property type="protein sequence ID" value="Os04t0542800-01"/>
    <property type="gene ID" value="Os04g0542800"/>
</dbReference>
<dbReference type="Gramene" id="Os04t0542800-01">
    <property type="protein sequence ID" value="Os04t0542800-01"/>
    <property type="gene ID" value="Os04g0542800"/>
</dbReference>
<dbReference type="KEGG" id="dosa:Os04g0542800"/>
<dbReference type="eggNOG" id="ENOG502QQ2H">
    <property type="taxonomic scope" value="Eukaryota"/>
</dbReference>
<dbReference type="HOGENOM" id="CLU_015477_2_0_1"/>
<dbReference type="InParanoid" id="Q7XN54"/>
<dbReference type="OMA" id="CFRREDS"/>
<dbReference type="OrthoDB" id="627262at2759"/>
<dbReference type="PlantReactome" id="R-OSA-9025727">
    <property type="pathway name" value="Iron uptake and transport in root vascular system"/>
</dbReference>
<dbReference type="Proteomes" id="UP000000763">
    <property type="component" value="Chromosome 4"/>
</dbReference>
<dbReference type="Proteomes" id="UP000059680">
    <property type="component" value="Chromosome 4"/>
</dbReference>
<dbReference type="ExpressionAtlas" id="Q7XN54">
    <property type="expression patterns" value="baseline and differential"/>
</dbReference>
<dbReference type="GO" id="GO:0005886">
    <property type="term" value="C:plasma membrane"/>
    <property type="evidence" value="ECO:0000318"/>
    <property type="project" value="GO_Central"/>
</dbReference>
<dbReference type="GO" id="GO:0051980">
    <property type="term" value="F:iron-nicotianamine transmembrane transporter activity"/>
    <property type="evidence" value="ECO:0000318"/>
    <property type="project" value="GO_Central"/>
</dbReference>
<dbReference type="GO" id="GO:0035673">
    <property type="term" value="F:oligopeptide transmembrane transporter activity"/>
    <property type="evidence" value="ECO:0007669"/>
    <property type="project" value="InterPro"/>
</dbReference>
<dbReference type="GO" id="GO:0010039">
    <property type="term" value="P:response to iron ion"/>
    <property type="evidence" value="ECO:0000318"/>
    <property type="project" value="GO_Central"/>
</dbReference>
<dbReference type="GO" id="GO:0048316">
    <property type="term" value="P:seed development"/>
    <property type="evidence" value="ECO:0000318"/>
    <property type="project" value="GO_Central"/>
</dbReference>
<dbReference type="InterPro" id="IPR004813">
    <property type="entry name" value="OPT"/>
</dbReference>
<dbReference type="InterPro" id="IPR045035">
    <property type="entry name" value="YSL-like"/>
</dbReference>
<dbReference type="NCBIfam" id="TIGR00728">
    <property type="entry name" value="OPT_sfam"/>
    <property type="match status" value="1"/>
</dbReference>
<dbReference type="PANTHER" id="PTHR31645:SF19">
    <property type="entry name" value="METAL-NICOTIANAMINE TRANSPORTER YSL16-RELATED"/>
    <property type="match status" value="1"/>
</dbReference>
<dbReference type="PANTHER" id="PTHR31645">
    <property type="entry name" value="OLIGOPEPTIDE TRANSPORTER YGL114W-RELATED"/>
    <property type="match status" value="1"/>
</dbReference>
<dbReference type="Pfam" id="PF03169">
    <property type="entry name" value="OPT"/>
    <property type="match status" value="1"/>
</dbReference>
<gene>
    <name type="primary">YSL16</name>
    <name type="ordered locus">Os04g0542800</name>
    <name type="ordered locus">LOC_Os04g45900</name>
    <name type="ORF">OSJNBb0103I08.15</name>
</gene>
<feature type="chain" id="PRO_0000363879" description="Probable metal-nicotianamine transporter YSL16">
    <location>
        <begin position="1"/>
        <end position="675"/>
    </location>
</feature>
<feature type="transmembrane region" description="Helical" evidence="2">
    <location>
        <begin position="50"/>
        <end position="70"/>
    </location>
</feature>
<feature type="transmembrane region" description="Helical" evidence="2">
    <location>
        <begin position="73"/>
        <end position="93"/>
    </location>
</feature>
<feature type="transmembrane region" description="Helical" evidence="2">
    <location>
        <begin position="118"/>
        <end position="138"/>
    </location>
</feature>
<feature type="transmembrane region" description="Helical" evidence="2">
    <location>
        <begin position="162"/>
        <end position="182"/>
    </location>
</feature>
<feature type="transmembrane region" description="Helical" evidence="2">
    <location>
        <begin position="231"/>
        <end position="251"/>
    </location>
</feature>
<feature type="transmembrane region" description="Helical" evidence="2">
    <location>
        <begin position="283"/>
        <end position="303"/>
    </location>
</feature>
<feature type="transmembrane region" description="Helical" evidence="2">
    <location>
        <begin position="329"/>
        <end position="349"/>
    </location>
</feature>
<feature type="transmembrane region" description="Helical" evidence="2">
    <location>
        <begin position="393"/>
        <end position="413"/>
    </location>
</feature>
<feature type="transmembrane region" description="Helical" evidence="2">
    <location>
        <begin position="421"/>
        <end position="441"/>
    </location>
</feature>
<feature type="transmembrane region" description="Helical" evidence="2">
    <location>
        <begin position="453"/>
        <end position="473"/>
    </location>
</feature>
<feature type="transmembrane region" description="Helical" evidence="2">
    <location>
        <begin position="507"/>
        <end position="527"/>
    </location>
</feature>
<feature type="transmembrane region" description="Helical" evidence="2">
    <location>
        <begin position="567"/>
        <end position="587"/>
    </location>
</feature>
<feature type="transmembrane region" description="Helical" evidence="2">
    <location>
        <begin position="605"/>
        <end position="625"/>
    </location>
</feature>
<feature type="transmembrane region" description="Helical" evidence="2">
    <location>
        <begin position="633"/>
        <end position="653"/>
    </location>
</feature>
<feature type="region of interest" description="Disordered" evidence="3">
    <location>
        <begin position="1"/>
        <end position="20"/>
    </location>
</feature>
<feature type="compositionally biased region" description="Gly residues" evidence="3">
    <location>
        <begin position="1"/>
        <end position="11"/>
    </location>
</feature>